<comment type="function">
    <text evidence="1">RuBisCO catalyzes two reactions: the carboxylation of D-ribulose 1,5-bisphosphate, the primary event in carbon dioxide fixation, as well as the oxidative fragmentation of the pentose substrate. Both reactions occur simultaneously and in competition at the same active site.</text>
</comment>
<comment type="catalytic activity">
    <reaction evidence="1">
        <text>2 (2R)-3-phosphoglycerate + 2 H(+) = D-ribulose 1,5-bisphosphate + CO2 + H2O</text>
        <dbReference type="Rhea" id="RHEA:23124"/>
        <dbReference type="ChEBI" id="CHEBI:15377"/>
        <dbReference type="ChEBI" id="CHEBI:15378"/>
        <dbReference type="ChEBI" id="CHEBI:16526"/>
        <dbReference type="ChEBI" id="CHEBI:57870"/>
        <dbReference type="ChEBI" id="CHEBI:58272"/>
        <dbReference type="EC" id="4.1.1.39"/>
    </reaction>
</comment>
<comment type="catalytic activity">
    <reaction evidence="1">
        <text>D-ribulose 1,5-bisphosphate + O2 = 2-phosphoglycolate + (2R)-3-phosphoglycerate + 2 H(+)</text>
        <dbReference type="Rhea" id="RHEA:36631"/>
        <dbReference type="ChEBI" id="CHEBI:15378"/>
        <dbReference type="ChEBI" id="CHEBI:15379"/>
        <dbReference type="ChEBI" id="CHEBI:57870"/>
        <dbReference type="ChEBI" id="CHEBI:58033"/>
        <dbReference type="ChEBI" id="CHEBI:58272"/>
    </reaction>
</comment>
<comment type="cofactor">
    <cofactor evidence="1">
        <name>Mg(2+)</name>
        <dbReference type="ChEBI" id="CHEBI:18420"/>
    </cofactor>
    <text evidence="1">Binds 1 Mg(2+) ion per subunit.</text>
</comment>
<comment type="subunit">
    <text evidence="1">Heterohexadecamer of 8 large chains and 8 small chains.</text>
</comment>
<comment type="miscellaneous">
    <text evidence="1">The basic functional RuBisCO is composed of a large chain homodimer in a 'head-to-tail' conformation. In form I RuBisCO this homodimer is arranged in a barrel-like tetramer with the small subunits forming a tetrameric 'cap' on each end of the 'barrel'.</text>
</comment>
<comment type="similarity">
    <text evidence="1">Belongs to the RuBisCO large chain family. Type I subfamily.</text>
</comment>
<protein>
    <recommendedName>
        <fullName evidence="1">Ribulose bisphosphate carboxylase large chain 1</fullName>
        <shortName evidence="1">RuBisCO large subunit 1</shortName>
        <ecNumber evidence="1">4.1.1.39</ecNumber>
    </recommendedName>
</protein>
<organism>
    <name type="scientific">Methylibium petroleiphilum (strain ATCC BAA-1232 / LMG 22953 / PM1)</name>
    <dbReference type="NCBI Taxonomy" id="420662"/>
    <lineage>
        <taxon>Bacteria</taxon>
        <taxon>Pseudomonadati</taxon>
        <taxon>Pseudomonadota</taxon>
        <taxon>Betaproteobacteria</taxon>
        <taxon>Burkholderiales</taxon>
        <taxon>Sphaerotilaceae</taxon>
        <taxon>Methylibium</taxon>
    </lineage>
</organism>
<keyword id="KW-0113">Calvin cycle</keyword>
<keyword id="KW-0120">Carbon dioxide fixation</keyword>
<keyword id="KW-0456">Lyase</keyword>
<keyword id="KW-0460">Magnesium</keyword>
<keyword id="KW-0479">Metal-binding</keyword>
<keyword id="KW-0503">Monooxygenase</keyword>
<keyword id="KW-0560">Oxidoreductase</keyword>
<keyword id="KW-0602">Photosynthesis</keyword>
<keyword id="KW-1185">Reference proteome</keyword>
<proteinExistence type="inferred from homology"/>
<reference key="1">
    <citation type="journal article" date="2007" name="J. Bacteriol.">
        <title>Whole-genome analysis of the methyl tert-butyl ether-degrading beta-proteobacterium Methylibium petroleiphilum PM1.</title>
        <authorList>
            <person name="Kane S.R."/>
            <person name="Chakicherla A.Y."/>
            <person name="Chain P.S.G."/>
            <person name="Schmidt R."/>
            <person name="Shin M.W."/>
            <person name="Legler T.C."/>
            <person name="Scow K.M."/>
            <person name="Larimer F.W."/>
            <person name="Lucas S.M."/>
            <person name="Richardson P.M."/>
            <person name="Hristova K.R."/>
        </authorList>
    </citation>
    <scope>NUCLEOTIDE SEQUENCE [LARGE SCALE GENOMIC DNA]</scope>
    <source>
        <strain>ATCC BAA-1232 / LMG 22953 / PM1</strain>
    </source>
</reference>
<accession>A2SFV1</accession>
<name>RBL1A_METPP</name>
<dbReference type="EC" id="4.1.1.39" evidence="1"/>
<dbReference type="EMBL" id="CP000555">
    <property type="protein sequence ID" value="ABM94440.1"/>
    <property type="molecule type" value="Genomic_DNA"/>
</dbReference>
<dbReference type="SMR" id="A2SFV1"/>
<dbReference type="STRING" id="420662.Mpe_A1478"/>
<dbReference type="KEGG" id="mpt:Mpe_A1478"/>
<dbReference type="eggNOG" id="COG1850">
    <property type="taxonomic scope" value="Bacteria"/>
</dbReference>
<dbReference type="HOGENOM" id="CLU_031450_2_0_4"/>
<dbReference type="Proteomes" id="UP000000366">
    <property type="component" value="Chromosome"/>
</dbReference>
<dbReference type="GO" id="GO:0000287">
    <property type="term" value="F:magnesium ion binding"/>
    <property type="evidence" value="ECO:0007669"/>
    <property type="project" value="UniProtKB-UniRule"/>
</dbReference>
<dbReference type="GO" id="GO:0004497">
    <property type="term" value="F:monooxygenase activity"/>
    <property type="evidence" value="ECO:0007669"/>
    <property type="project" value="UniProtKB-KW"/>
</dbReference>
<dbReference type="GO" id="GO:0016984">
    <property type="term" value="F:ribulose-bisphosphate carboxylase activity"/>
    <property type="evidence" value="ECO:0007669"/>
    <property type="project" value="UniProtKB-UniRule"/>
</dbReference>
<dbReference type="GO" id="GO:0019253">
    <property type="term" value="P:reductive pentose-phosphate cycle"/>
    <property type="evidence" value="ECO:0007669"/>
    <property type="project" value="UniProtKB-UniRule"/>
</dbReference>
<dbReference type="CDD" id="cd08212">
    <property type="entry name" value="RuBisCO_large_I"/>
    <property type="match status" value="1"/>
</dbReference>
<dbReference type="Gene3D" id="3.20.20.110">
    <property type="entry name" value="Ribulose bisphosphate carboxylase, large subunit, C-terminal domain"/>
    <property type="match status" value="1"/>
</dbReference>
<dbReference type="Gene3D" id="3.30.70.150">
    <property type="entry name" value="RuBisCO large subunit, N-terminal domain"/>
    <property type="match status" value="1"/>
</dbReference>
<dbReference type="HAMAP" id="MF_01338">
    <property type="entry name" value="RuBisCO_L_type1"/>
    <property type="match status" value="1"/>
</dbReference>
<dbReference type="InterPro" id="IPR033966">
    <property type="entry name" value="RuBisCO"/>
</dbReference>
<dbReference type="InterPro" id="IPR020878">
    <property type="entry name" value="RuBisCo_large_chain_AS"/>
</dbReference>
<dbReference type="InterPro" id="IPR000685">
    <property type="entry name" value="RuBisCO_lsu_C"/>
</dbReference>
<dbReference type="InterPro" id="IPR036376">
    <property type="entry name" value="RuBisCO_lsu_C_sf"/>
</dbReference>
<dbReference type="InterPro" id="IPR017443">
    <property type="entry name" value="RuBisCO_lsu_fd_N"/>
</dbReference>
<dbReference type="InterPro" id="IPR036422">
    <property type="entry name" value="RuBisCO_lsu_N_sf"/>
</dbReference>
<dbReference type="InterPro" id="IPR020888">
    <property type="entry name" value="RuBisCO_lsuI"/>
</dbReference>
<dbReference type="NCBIfam" id="NF003252">
    <property type="entry name" value="PRK04208.1"/>
    <property type="match status" value="1"/>
</dbReference>
<dbReference type="PANTHER" id="PTHR42704">
    <property type="entry name" value="RIBULOSE BISPHOSPHATE CARBOXYLASE"/>
    <property type="match status" value="1"/>
</dbReference>
<dbReference type="PANTHER" id="PTHR42704:SF17">
    <property type="entry name" value="RIBULOSE BISPHOSPHATE CARBOXYLASE LARGE CHAIN"/>
    <property type="match status" value="1"/>
</dbReference>
<dbReference type="Pfam" id="PF00016">
    <property type="entry name" value="RuBisCO_large"/>
    <property type="match status" value="1"/>
</dbReference>
<dbReference type="Pfam" id="PF02788">
    <property type="entry name" value="RuBisCO_large_N"/>
    <property type="match status" value="1"/>
</dbReference>
<dbReference type="SFLD" id="SFLDG01052">
    <property type="entry name" value="RuBisCO"/>
    <property type="match status" value="1"/>
</dbReference>
<dbReference type="SFLD" id="SFLDS00014">
    <property type="entry name" value="RuBisCO"/>
    <property type="match status" value="1"/>
</dbReference>
<dbReference type="SFLD" id="SFLDG00301">
    <property type="entry name" value="RuBisCO-like_proteins"/>
    <property type="match status" value="1"/>
</dbReference>
<dbReference type="SUPFAM" id="SSF51649">
    <property type="entry name" value="RuBisCo, C-terminal domain"/>
    <property type="match status" value="1"/>
</dbReference>
<dbReference type="SUPFAM" id="SSF54966">
    <property type="entry name" value="RuBisCO, large subunit, small (N-terminal) domain"/>
    <property type="match status" value="1"/>
</dbReference>
<dbReference type="PROSITE" id="PS00157">
    <property type="entry name" value="RUBISCO_LARGE"/>
    <property type="match status" value="1"/>
</dbReference>
<feature type="chain" id="PRO_0000299964" description="Ribulose bisphosphate carboxylase large chain 1">
    <location>
        <begin position="1"/>
        <end position="488"/>
    </location>
</feature>
<feature type="active site" description="Proton acceptor" evidence="1">
    <location>
        <position position="180"/>
    </location>
</feature>
<feature type="active site" description="Proton acceptor" evidence="1">
    <location>
        <position position="298"/>
    </location>
</feature>
<feature type="binding site" description="in homodimeric partner" evidence="1">
    <location>
        <position position="128"/>
    </location>
    <ligand>
        <name>substrate</name>
    </ligand>
</feature>
<feature type="binding site" evidence="1">
    <location>
        <position position="178"/>
    </location>
    <ligand>
        <name>substrate</name>
    </ligand>
</feature>
<feature type="binding site" evidence="1">
    <location>
        <position position="182"/>
    </location>
    <ligand>
        <name>substrate</name>
    </ligand>
</feature>
<feature type="binding site" description="via carbamate group" evidence="1">
    <location>
        <position position="206"/>
    </location>
    <ligand>
        <name>Mg(2+)</name>
        <dbReference type="ChEBI" id="CHEBI:18420"/>
    </ligand>
</feature>
<feature type="binding site" evidence="1">
    <location>
        <position position="208"/>
    </location>
    <ligand>
        <name>Mg(2+)</name>
        <dbReference type="ChEBI" id="CHEBI:18420"/>
    </ligand>
</feature>
<feature type="binding site" evidence="1">
    <location>
        <position position="209"/>
    </location>
    <ligand>
        <name>Mg(2+)</name>
        <dbReference type="ChEBI" id="CHEBI:18420"/>
    </ligand>
</feature>
<feature type="binding site" evidence="1">
    <location>
        <position position="299"/>
    </location>
    <ligand>
        <name>substrate</name>
    </ligand>
</feature>
<feature type="binding site" evidence="1">
    <location>
        <position position="331"/>
    </location>
    <ligand>
        <name>substrate</name>
    </ligand>
</feature>
<feature type="binding site" evidence="1">
    <location>
        <position position="383"/>
    </location>
    <ligand>
        <name>substrate</name>
    </ligand>
</feature>
<feature type="site" description="Transition state stabilizer" evidence="1">
    <location>
        <position position="338"/>
    </location>
</feature>
<feature type="modified residue" description="N6-carboxylysine" evidence="1">
    <location>
        <position position="206"/>
    </location>
</feature>
<gene>
    <name evidence="1" type="primary">cbbL1</name>
    <name type="ordered locus">Mpe_A1478</name>
</gene>
<sequence length="488" mass="53929">MNKPMEDAAITDVKKRYSAGVLKYRQMGYWMPDYVPKDTDTICLFRITPQDGVDPVEAAAAVAGESSTATWTVVWTDRLTACDSYRAKAYKVEPVPGIPGQFFAWVAYDIILFEEGSIANMTASLIGNVFSFKPLKAARLEDIRIPVAYVKTFKGPPTGLVVERERLDKFGRPLLGATTKPKLGLSGRNYGRVVYEGLKGGLDFMKDDENINSQPFMHWRDRYLYVMDAVNKASAATGEIKGSYLNVTAATMEDMYERAEFAKELGSVIVMIDLVIGYTAIQSMSNWARRNDVILHLHRAGHGTYTRQKNHGVSFRVIAKWMRLAGVDHIHTGTAVGKLEGDPMTVQGYYNVCRDSVTKQDLPRGLFFDQDWADLKKVMPVASGGIHAGQMHQLIDLFGDDVVLQFGGGTIGHPQGIQAGAVANRVALECMVKARNEGRDIKNEGPEILRKAAQFCAPLKQALDTWGEISFNYTPTDTSDYAVTPGVA</sequence>
<evidence type="ECO:0000255" key="1">
    <source>
        <dbReference type="HAMAP-Rule" id="MF_01338"/>
    </source>
</evidence>